<protein>
    <recommendedName>
        <fullName evidence="1">Lipid-A-disaccharide synthase</fullName>
        <ecNumber evidence="1">2.4.1.182</ecNumber>
    </recommendedName>
</protein>
<name>LPXB_BURCH</name>
<dbReference type="EC" id="2.4.1.182" evidence="1"/>
<dbReference type="EMBL" id="CP000458">
    <property type="protein sequence ID" value="ABK08757.1"/>
    <property type="molecule type" value="Genomic_DNA"/>
</dbReference>
<dbReference type="RefSeq" id="WP_011549546.1">
    <property type="nucleotide sequence ID" value="NC_008542.1"/>
</dbReference>
<dbReference type="SMR" id="A0K8D0"/>
<dbReference type="CAZy" id="GT19">
    <property type="family name" value="Glycosyltransferase Family 19"/>
</dbReference>
<dbReference type="KEGG" id="bch:Bcen2424_2006"/>
<dbReference type="HOGENOM" id="CLU_036577_3_0_4"/>
<dbReference type="UniPathway" id="UPA00973"/>
<dbReference type="GO" id="GO:0016020">
    <property type="term" value="C:membrane"/>
    <property type="evidence" value="ECO:0007669"/>
    <property type="project" value="GOC"/>
</dbReference>
<dbReference type="GO" id="GO:0008915">
    <property type="term" value="F:lipid-A-disaccharide synthase activity"/>
    <property type="evidence" value="ECO:0007669"/>
    <property type="project" value="UniProtKB-UniRule"/>
</dbReference>
<dbReference type="GO" id="GO:0005543">
    <property type="term" value="F:phospholipid binding"/>
    <property type="evidence" value="ECO:0007669"/>
    <property type="project" value="TreeGrafter"/>
</dbReference>
<dbReference type="GO" id="GO:0009245">
    <property type="term" value="P:lipid A biosynthetic process"/>
    <property type="evidence" value="ECO:0007669"/>
    <property type="project" value="UniProtKB-UniRule"/>
</dbReference>
<dbReference type="HAMAP" id="MF_00392">
    <property type="entry name" value="LpxB"/>
    <property type="match status" value="1"/>
</dbReference>
<dbReference type="InterPro" id="IPR003835">
    <property type="entry name" value="Glyco_trans_19"/>
</dbReference>
<dbReference type="NCBIfam" id="TIGR00215">
    <property type="entry name" value="lpxB"/>
    <property type="match status" value="1"/>
</dbReference>
<dbReference type="PANTHER" id="PTHR30372">
    <property type="entry name" value="LIPID-A-DISACCHARIDE SYNTHASE"/>
    <property type="match status" value="1"/>
</dbReference>
<dbReference type="PANTHER" id="PTHR30372:SF4">
    <property type="entry name" value="LIPID-A-DISACCHARIDE SYNTHASE, MITOCHONDRIAL-RELATED"/>
    <property type="match status" value="1"/>
</dbReference>
<dbReference type="Pfam" id="PF02684">
    <property type="entry name" value="LpxB"/>
    <property type="match status" value="1"/>
</dbReference>
<dbReference type="SUPFAM" id="SSF53756">
    <property type="entry name" value="UDP-Glycosyltransferase/glycogen phosphorylase"/>
    <property type="match status" value="1"/>
</dbReference>
<gene>
    <name evidence="1" type="primary">lpxB</name>
    <name type="ordered locus">Bcen2424_2006</name>
</gene>
<organism>
    <name type="scientific">Burkholderia cenocepacia (strain HI2424)</name>
    <dbReference type="NCBI Taxonomy" id="331272"/>
    <lineage>
        <taxon>Bacteria</taxon>
        <taxon>Pseudomonadati</taxon>
        <taxon>Pseudomonadota</taxon>
        <taxon>Betaproteobacteria</taxon>
        <taxon>Burkholderiales</taxon>
        <taxon>Burkholderiaceae</taxon>
        <taxon>Burkholderia</taxon>
        <taxon>Burkholderia cepacia complex</taxon>
    </lineage>
</organism>
<comment type="function">
    <text evidence="1">Condensation of UDP-2,3-diacylglucosamine and 2,3-diacylglucosamine-1-phosphate to form lipid A disaccharide, a precursor of lipid A, a phosphorylated glycolipid that anchors the lipopolysaccharide to the outer membrane of the cell.</text>
</comment>
<comment type="catalytic activity">
    <reaction evidence="1">
        <text>a lipid X + a UDP-2-N,3-O-bis[(3R)-3-hydroxyacyl]-alpha-D-glucosamine = a lipid A disaccharide + UDP + H(+)</text>
        <dbReference type="Rhea" id="RHEA:67828"/>
        <dbReference type="ChEBI" id="CHEBI:15378"/>
        <dbReference type="ChEBI" id="CHEBI:58223"/>
        <dbReference type="ChEBI" id="CHEBI:137748"/>
        <dbReference type="ChEBI" id="CHEBI:176338"/>
        <dbReference type="ChEBI" id="CHEBI:176343"/>
        <dbReference type="EC" id="2.4.1.182"/>
    </reaction>
</comment>
<comment type="pathway">
    <text evidence="1">Bacterial outer membrane biogenesis; LPS lipid A biosynthesis.</text>
</comment>
<comment type="similarity">
    <text evidence="1">Belongs to the LpxB family.</text>
</comment>
<evidence type="ECO:0000255" key="1">
    <source>
        <dbReference type="HAMAP-Rule" id="MF_00392"/>
    </source>
</evidence>
<feature type="chain" id="PRO_1000049385" description="Lipid-A-disaccharide synthase">
    <location>
        <begin position="1"/>
        <end position="389"/>
    </location>
</feature>
<accession>A0K8D0</accession>
<proteinExistence type="inferred from homology"/>
<sequence>MPLPTNQLRLAMVAGEPSGDLLAASLLGGLRERLPESAQYYGIGGQRMIAQGFDSHWQMDKLTVRGYVEALGQIPEILRIRGELKRQLLAERPAAFIGVDAPDFNFNVEQAARDAGIPSIHFVCPSIWAWRGGRIKKIAKSVDHMLCLFPFEPAILDKAGVASTYVGHPLADDIPLEPDTHGARIALGLPADGPVIAVLPGSRRSEIALIGPTFFAAMALMQQREPGVRFVMPAATPALRELLQPLVDAHPQLALTITDGRSQVAMTAADAILVKSGTVTLEAALLKKPMVISYKVPWLTGQIMRRQGYLPYVGLPNILAGRFVVPELLQHFATPEALADATLTQLSDDANRRTLTEVFTEMHLSLRQNTAAKAAEAVVRVLEQRKGRA</sequence>
<keyword id="KW-0328">Glycosyltransferase</keyword>
<keyword id="KW-0441">Lipid A biosynthesis</keyword>
<keyword id="KW-0444">Lipid biosynthesis</keyword>
<keyword id="KW-0443">Lipid metabolism</keyword>
<keyword id="KW-0808">Transferase</keyword>
<reference key="1">
    <citation type="submission" date="2006-08" db="EMBL/GenBank/DDBJ databases">
        <title>Complete sequence of chromosome 1 of Burkholderia cenocepacia HI2424.</title>
        <authorList>
            <person name="Copeland A."/>
            <person name="Lucas S."/>
            <person name="Lapidus A."/>
            <person name="Barry K."/>
            <person name="Detter J.C."/>
            <person name="Glavina del Rio T."/>
            <person name="Hammon N."/>
            <person name="Israni S."/>
            <person name="Pitluck S."/>
            <person name="Chain P."/>
            <person name="Malfatti S."/>
            <person name="Shin M."/>
            <person name="Vergez L."/>
            <person name="Schmutz J."/>
            <person name="Larimer F."/>
            <person name="Land M."/>
            <person name="Hauser L."/>
            <person name="Kyrpides N."/>
            <person name="Kim E."/>
            <person name="LiPuma J.J."/>
            <person name="Gonzalez C.F."/>
            <person name="Konstantinidis K."/>
            <person name="Tiedje J.M."/>
            <person name="Richardson P."/>
        </authorList>
    </citation>
    <scope>NUCLEOTIDE SEQUENCE [LARGE SCALE GENOMIC DNA]</scope>
    <source>
        <strain>HI2424</strain>
    </source>
</reference>